<organism>
    <name type="scientific">Staphylococcus epidermidis (strain ATCC 35984 / DSM 28319 / BCRC 17069 / CCUG 31568 / BM 3577 / RP62A)</name>
    <dbReference type="NCBI Taxonomy" id="176279"/>
    <lineage>
        <taxon>Bacteria</taxon>
        <taxon>Bacillati</taxon>
        <taxon>Bacillota</taxon>
        <taxon>Bacilli</taxon>
        <taxon>Bacillales</taxon>
        <taxon>Staphylococcaceae</taxon>
        <taxon>Staphylococcus</taxon>
    </lineage>
</organism>
<protein>
    <recommendedName>
        <fullName evidence="1">Heme oxygenase (staphylobilin-producing)</fullName>
        <ecNumber evidence="1">1.14.99.48</ecNumber>
    </recommendedName>
    <alternativeName>
        <fullName evidence="1">Heme-degrading monooxygenase</fullName>
    </alternativeName>
    <alternativeName>
        <fullName evidence="1">Iron-regulated surface determinant</fullName>
    </alternativeName>
    <alternativeName>
        <fullName evidence="1">Iron-responsive surface determinant</fullName>
    </alternativeName>
</protein>
<reference key="1">
    <citation type="journal article" date="2005" name="J. Bacteriol.">
        <title>Insights on evolution of virulence and resistance from the complete genome analysis of an early methicillin-resistant Staphylococcus aureus strain and a biofilm-producing methicillin-resistant Staphylococcus epidermidis strain.</title>
        <authorList>
            <person name="Gill S.R."/>
            <person name="Fouts D.E."/>
            <person name="Archer G.L."/>
            <person name="Mongodin E.F."/>
            <person name="DeBoy R.T."/>
            <person name="Ravel J."/>
            <person name="Paulsen I.T."/>
            <person name="Kolonay J.F."/>
            <person name="Brinkac L.M."/>
            <person name="Beanan M.J."/>
            <person name="Dodson R.J."/>
            <person name="Daugherty S.C."/>
            <person name="Madupu R."/>
            <person name="Angiuoli S.V."/>
            <person name="Durkin A.S."/>
            <person name="Haft D.H."/>
            <person name="Vamathevan J.J."/>
            <person name="Khouri H."/>
            <person name="Utterback T.R."/>
            <person name="Lee C."/>
            <person name="Dimitrov G."/>
            <person name="Jiang L."/>
            <person name="Qin H."/>
            <person name="Weidman J."/>
            <person name="Tran K."/>
            <person name="Kang K.H."/>
            <person name="Hance I.R."/>
            <person name="Nelson K.E."/>
            <person name="Fraser C.M."/>
        </authorList>
    </citation>
    <scope>NUCLEOTIDE SEQUENCE [LARGE SCALE GENOMIC DNA]</scope>
    <source>
        <strain>ATCC 35984 / DSM 28319 / BCRC 17069 / CCUG 31568 / BM 3577 / RP62A</strain>
    </source>
</reference>
<feature type="chain" id="PRO_0000270098" description="Heme oxygenase (staphylobilin-producing)">
    <location>
        <begin position="1"/>
        <end position="104"/>
    </location>
</feature>
<feature type="domain" description="ABM" evidence="1">
    <location>
        <begin position="2"/>
        <end position="92"/>
    </location>
</feature>
<feature type="binding site" evidence="1">
    <location>
        <position position="6"/>
    </location>
    <ligand>
        <name>Fe cation</name>
        <dbReference type="ChEBI" id="CHEBI:24875"/>
    </ligand>
</feature>
<feature type="binding site" description="axial binding residue" evidence="1">
    <location>
        <position position="76"/>
    </location>
    <ligand>
        <name>heme</name>
        <dbReference type="ChEBI" id="CHEBI:30413"/>
    </ligand>
    <ligandPart>
        <name>Fe</name>
        <dbReference type="ChEBI" id="CHEBI:18248"/>
    </ligandPart>
</feature>
<feature type="site" description="Transition state stabilizer" evidence="1">
    <location>
        <position position="66"/>
    </location>
</feature>
<dbReference type="EC" id="1.14.99.48" evidence="1"/>
<dbReference type="EMBL" id="CP000029">
    <property type="protein sequence ID" value="AAW55132.1"/>
    <property type="molecule type" value="Genomic_DNA"/>
</dbReference>
<dbReference type="RefSeq" id="WP_001829739.1">
    <property type="nucleotide sequence ID" value="NC_002976.3"/>
</dbReference>
<dbReference type="SMR" id="Q5HM56"/>
<dbReference type="STRING" id="176279.SERP1773"/>
<dbReference type="KEGG" id="ser:SERP1773"/>
<dbReference type="eggNOG" id="COG2329">
    <property type="taxonomic scope" value="Bacteria"/>
</dbReference>
<dbReference type="HOGENOM" id="CLU_141544_2_1_9"/>
<dbReference type="Proteomes" id="UP000000531">
    <property type="component" value="Chromosome"/>
</dbReference>
<dbReference type="GO" id="GO:0005737">
    <property type="term" value="C:cytoplasm"/>
    <property type="evidence" value="ECO:0007669"/>
    <property type="project" value="UniProtKB-SubCell"/>
</dbReference>
<dbReference type="GO" id="GO:0020037">
    <property type="term" value="F:heme binding"/>
    <property type="evidence" value="ECO:0007669"/>
    <property type="project" value="UniProtKB-UniRule"/>
</dbReference>
<dbReference type="GO" id="GO:0004392">
    <property type="term" value="F:heme oxygenase (decyclizing) activity"/>
    <property type="evidence" value="ECO:0007669"/>
    <property type="project" value="UniProtKB-UniRule"/>
</dbReference>
<dbReference type="GO" id="GO:0005506">
    <property type="term" value="F:iron ion binding"/>
    <property type="evidence" value="ECO:0007669"/>
    <property type="project" value="UniProtKB-UniRule"/>
</dbReference>
<dbReference type="GO" id="GO:0042167">
    <property type="term" value="P:heme catabolic process"/>
    <property type="evidence" value="ECO:0007669"/>
    <property type="project" value="UniProtKB-UniRule"/>
</dbReference>
<dbReference type="GO" id="GO:0033212">
    <property type="term" value="P:iron import into cell"/>
    <property type="evidence" value="ECO:0007669"/>
    <property type="project" value="InterPro"/>
</dbReference>
<dbReference type="Gene3D" id="3.30.70.100">
    <property type="match status" value="1"/>
</dbReference>
<dbReference type="HAMAP" id="MF_01272">
    <property type="entry name" value="Heme_degrading_monooxygenase"/>
    <property type="match status" value="1"/>
</dbReference>
<dbReference type="InterPro" id="IPR007138">
    <property type="entry name" value="ABM_dom"/>
</dbReference>
<dbReference type="InterPro" id="IPR011008">
    <property type="entry name" value="Dimeric_a/b-barrel"/>
</dbReference>
<dbReference type="InterPro" id="IPR050404">
    <property type="entry name" value="Heme-degrading_MO"/>
</dbReference>
<dbReference type="InterPro" id="IPR023953">
    <property type="entry name" value="IsdG"/>
</dbReference>
<dbReference type="NCBIfam" id="NF009840">
    <property type="entry name" value="PRK13315.1"/>
    <property type="match status" value="1"/>
</dbReference>
<dbReference type="PANTHER" id="PTHR34474:SF4">
    <property type="entry name" value="HEME OXYGENASE (STAPHYLOBILIN-PRODUCING) 1"/>
    <property type="match status" value="1"/>
</dbReference>
<dbReference type="PANTHER" id="PTHR34474">
    <property type="entry name" value="SIGNAL TRANSDUCTION PROTEIN TRAP"/>
    <property type="match status" value="1"/>
</dbReference>
<dbReference type="Pfam" id="PF03992">
    <property type="entry name" value="ABM"/>
    <property type="match status" value="1"/>
</dbReference>
<dbReference type="SUPFAM" id="SSF54909">
    <property type="entry name" value="Dimeric alpha+beta barrel"/>
    <property type="match status" value="1"/>
</dbReference>
<dbReference type="PROSITE" id="PS51725">
    <property type="entry name" value="ABM"/>
    <property type="match status" value="1"/>
</dbReference>
<gene>
    <name type="primary">isdG</name>
    <name type="ordered locus">SERP1773</name>
</gene>
<accession>Q5HM56</accession>
<comment type="function">
    <text evidence="1">Allows bacterial pathogens to use the host heme as an iron source. Catalyzes the oxidative degradation of the heme macrocyclic porphyrin ring to the oxo-bilirubin chromophore staphylobilin (a mixture of the linear tetrapyrroles 5-oxo-delta-bilirubin and 15-oxo-beta-bilirubin) in the presence of a suitable electron donor such as ascorbate or NADPH--cytochrome P450 reductase, with subsequent release of free iron.</text>
</comment>
<comment type="catalytic activity">
    <reaction evidence="1">
        <text>heme b + 5 AH2 + 4 O2 + 2 H(+) = delta-staphylobilin + Fe(2+) + formaldehyde + 5 A + 4 H2O</text>
        <dbReference type="Rhea" id="RHEA:37039"/>
        <dbReference type="ChEBI" id="CHEBI:13193"/>
        <dbReference type="ChEBI" id="CHEBI:15377"/>
        <dbReference type="ChEBI" id="CHEBI:15378"/>
        <dbReference type="ChEBI" id="CHEBI:15379"/>
        <dbReference type="ChEBI" id="CHEBI:16842"/>
        <dbReference type="ChEBI" id="CHEBI:17499"/>
        <dbReference type="ChEBI" id="CHEBI:29033"/>
        <dbReference type="ChEBI" id="CHEBI:60344"/>
        <dbReference type="ChEBI" id="CHEBI:74361"/>
        <dbReference type="EC" id="1.14.99.48"/>
    </reaction>
</comment>
<comment type="catalytic activity">
    <reaction evidence="1">
        <text>heme b + 5 AH2 + 4 O2 + 2 H(+) = beta-staphylobilin + Fe(2+) + formaldehyde + 5 A + 4 H2O</text>
        <dbReference type="Rhea" id="RHEA:37363"/>
        <dbReference type="ChEBI" id="CHEBI:13193"/>
        <dbReference type="ChEBI" id="CHEBI:15377"/>
        <dbReference type="ChEBI" id="CHEBI:15378"/>
        <dbReference type="ChEBI" id="CHEBI:15379"/>
        <dbReference type="ChEBI" id="CHEBI:16842"/>
        <dbReference type="ChEBI" id="CHEBI:17499"/>
        <dbReference type="ChEBI" id="CHEBI:29033"/>
        <dbReference type="ChEBI" id="CHEBI:60344"/>
        <dbReference type="ChEBI" id="CHEBI:74362"/>
        <dbReference type="EC" id="1.14.99.48"/>
    </reaction>
</comment>
<comment type="subunit">
    <text evidence="1">Homodimer.</text>
</comment>
<comment type="subcellular location">
    <subcellularLocation>
        <location evidence="1">Cytoplasm</location>
    </subcellularLocation>
</comment>
<comment type="similarity">
    <text evidence="1">Belongs to the antibiotic biosynthesis monooxygenase family. Heme-degrading monooxygenase IsdG subfamily.</text>
</comment>
<sequence length="104" mass="12023">MFVVTNRITVKKGYAKQMAPNFTKGGPIESLKGFEGIEVWQIDKDDYSEDMYVNSWWETEEDFKNWVNSDVFKQAHKNTGKSEDSPVIKSEIVKSNVLSSLNRR</sequence>
<evidence type="ECO:0000255" key="1">
    <source>
        <dbReference type="HAMAP-Rule" id="MF_01272"/>
    </source>
</evidence>
<keyword id="KW-0963">Cytoplasm</keyword>
<keyword id="KW-0349">Heme</keyword>
<keyword id="KW-0408">Iron</keyword>
<keyword id="KW-0479">Metal-binding</keyword>
<keyword id="KW-0503">Monooxygenase</keyword>
<keyword id="KW-0560">Oxidoreductase</keyword>
<keyword id="KW-1185">Reference proteome</keyword>
<name>HDOX_STAEQ</name>
<proteinExistence type="inferred from homology"/>